<evidence type="ECO:0000256" key="1">
    <source>
        <dbReference type="SAM" id="MobiDB-lite"/>
    </source>
</evidence>
<feature type="chain" id="PRO_0000065488" description="Uncharacterized protein T28D9.11">
    <location>
        <begin position="1"/>
        <end position="61"/>
    </location>
</feature>
<feature type="region of interest" description="Disordered" evidence="1">
    <location>
        <begin position="1"/>
        <end position="40"/>
    </location>
</feature>
<feature type="compositionally biased region" description="Basic and acidic residues" evidence="1">
    <location>
        <begin position="9"/>
        <end position="25"/>
    </location>
</feature>
<sequence>MRRGGEPQCDGREFRIASSPAREREDDNETAPPQTSAAQEPLVDCFLGTVPNSCFVRCELI</sequence>
<organism>
    <name type="scientific">Caenorhabditis elegans</name>
    <dbReference type="NCBI Taxonomy" id="6239"/>
    <lineage>
        <taxon>Eukaryota</taxon>
        <taxon>Metazoa</taxon>
        <taxon>Ecdysozoa</taxon>
        <taxon>Nematoda</taxon>
        <taxon>Chromadorea</taxon>
        <taxon>Rhabditida</taxon>
        <taxon>Rhabditina</taxon>
        <taxon>Rhabditomorpha</taxon>
        <taxon>Rhabditoidea</taxon>
        <taxon>Rhabditidae</taxon>
        <taxon>Peloderinae</taxon>
        <taxon>Caenorhabditis</taxon>
    </lineage>
</organism>
<protein>
    <recommendedName>
        <fullName>Uncharacterized protein T28D9.11</fullName>
    </recommendedName>
</protein>
<dbReference type="EMBL" id="FO081595">
    <property type="protein sequence ID" value="CCD72710.1"/>
    <property type="molecule type" value="Genomic_DNA"/>
</dbReference>
<dbReference type="PIR" id="T16954">
    <property type="entry name" value="T16954"/>
</dbReference>
<dbReference type="RefSeq" id="NP_495311.2">
    <property type="nucleotide sequence ID" value="NM_062910.5"/>
</dbReference>
<dbReference type="PaxDb" id="6239-T28D9.11"/>
<dbReference type="EnsemblMetazoa" id="T28D9.11.1">
    <property type="protein sequence ID" value="T28D9.11.1"/>
    <property type="gene ID" value="WBGene00020899"/>
</dbReference>
<dbReference type="GeneID" id="189046"/>
<dbReference type="KEGG" id="cel:CELE_T28D9.11"/>
<dbReference type="UCSC" id="T28D9.11">
    <property type="organism name" value="c. elegans"/>
</dbReference>
<dbReference type="AGR" id="WB:WBGene00020899"/>
<dbReference type="CTD" id="189046"/>
<dbReference type="WormBase" id="T28D9.11">
    <property type="protein sequence ID" value="CE41703"/>
    <property type="gene ID" value="WBGene00020899"/>
</dbReference>
<dbReference type="HOGENOM" id="CLU_2924798_0_0_1"/>
<dbReference type="InParanoid" id="Q10027"/>
<dbReference type="PRO" id="PR:Q10027"/>
<dbReference type="Proteomes" id="UP000001940">
    <property type="component" value="Chromosome II"/>
</dbReference>
<gene>
    <name type="ORF">T28D9.11</name>
</gene>
<keyword id="KW-1185">Reference proteome</keyword>
<name>YSXB_CAEEL</name>
<reference key="1">
    <citation type="journal article" date="1998" name="Science">
        <title>Genome sequence of the nematode C. elegans: a platform for investigating biology.</title>
        <authorList>
            <consortium name="The C. elegans sequencing consortium"/>
        </authorList>
    </citation>
    <scope>NUCLEOTIDE SEQUENCE [LARGE SCALE GENOMIC DNA]</scope>
    <source>
        <strain>Bristol N2</strain>
    </source>
</reference>
<accession>Q10027</accession>
<proteinExistence type="predicted"/>